<organism>
    <name type="scientific">Korarchaeum cryptofilum (strain OPF8)</name>
    <dbReference type="NCBI Taxonomy" id="374847"/>
    <lineage>
        <taxon>Archaea</taxon>
        <taxon>Thermoproteota</taxon>
        <taxon>Candidatus Korarchaeia</taxon>
        <taxon>Candidatus Korarchaeales</taxon>
        <taxon>Candidatus Korarchaeaceae</taxon>
        <taxon>Candidatus Korarchaeum</taxon>
    </lineage>
</organism>
<proteinExistence type="inferred from homology"/>
<protein>
    <recommendedName>
        <fullName evidence="1">GTP-dependent dephospho-CoA kinase</fullName>
        <ecNumber evidence="1">2.7.1.237</ecNumber>
    </recommendedName>
    <alternativeName>
        <fullName evidence="1">Dephospho-coenzyme A kinase</fullName>
        <shortName evidence="1">DPCK</shortName>
    </alternativeName>
</protein>
<dbReference type="EC" id="2.7.1.237" evidence="1"/>
<dbReference type="EMBL" id="CP000968">
    <property type="protein sequence ID" value="ACB08108.1"/>
    <property type="molecule type" value="Genomic_DNA"/>
</dbReference>
<dbReference type="RefSeq" id="WP_012310005.1">
    <property type="nucleotide sequence ID" value="NC_010482.1"/>
</dbReference>
<dbReference type="SMR" id="B1L6M9"/>
<dbReference type="FunCoup" id="B1L6M9">
    <property type="interactions" value="3"/>
</dbReference>
<dbReference type="STRING" id="374847.Kcr_1362"/>
<dbReference type="EnsemblBacteria" id="ACB08108">
    <property type="protein sequence ID" value="ACB08108"/>
    <property type="gene ID" value="Kcr_1362"/>
</dbReference>
<dbReference type="GeneID" id="6094639"/>
<dbReference type="KEGG" id="kcr:Kcr_1362"/>
<dbReference type="eggNOG" id="arCOG04076">
    <property type="taxonomic scope" value="Archaea"/>
</dbReference>
<dbReference type="HOGENOM" id="CLU_120795_0_0_2"/>
<dbReference type="InParanoid" id="B1L6M9"/>
<dbReference type="OrthoDB" id="15447at2157"/>
<dbReference type="PhylomeDB" id="B1L6M9"/>
<dbReference type="UniPathway" id="UPA00241"/>
<dbReference type="Proteomes" id="UP000001686">
    <property type="component" value="Chromosome"/>
</dbReference>
<dbReference type="GO" id="GO:0005525">
    <property type="term" value="F:GTP binding"/>
    <property type="evidence" value="ECO:0007669"/>
    <property type="project" value="UniProtKB-UniRule"/>
</dbReference>
<dbReference type="GO" id="GO:0016301">
    <property type="term" value="F:kinase activity"/>
    <property type="evidence" value="ECO:0007669"/>
    <property type="project" value="UniProtKB-UniRule"/>
</dbReference>
<dbReference type="GO" id="GO:0015937">
    <property type="term" value="P:coenzyme A biosynthetic process"/>
    <property type="evidence" value="ECO:0007669"/>
    <property type="project" value="UniProtKB-UniRule"/>
</dbReference>
<dbReference type="HAMAP" id="MF_00590">
    <property type="entry name" value="Dephospho_CoA_kinase_GTP_dep"/>
    <property type="match status" value="1"/>
</dbReference>
<dbReference type="InterPro" id="IPR007164">
    <property type="entry name" value="GTP-dep_dephospho-CoA_kin"/>
</dbReference>
<dbReference type="PANTHER" id="PTHR40732:SF1">
    <property type="entry name" value="GTP-DEPENDENT DEPHOSPHO-COA KINASE"/>
    <property type="match status" value="1"/>
</dbReference>
<dbReference type="PANTHER" id="PTHR40732">
    <property type="entry name" value="UPF0218 PROTEIN TK1697"/>
    <property type="match status" value="1"/>
</dbReference>
<dbReference type="Pfam" id="PF04019">
    <property type="entry name" value="DUF359"/>
    <property type="match status" value="1"/>
</dbReference>
<evidence type="ECO:0000255" key="1">
    <source>
        <dbReference type="HAMAP-Rule" id="MF_00590"/>
    </source>
</evidence>
<comment type="function">
    <text evidence="1">Catalyzes the GTP-dependent phosphorylation of the 3'-hydroxyl group of dephosphocoenzyme A to form coenzyme A (CoA).</text>
</comment>
<comment type="catalytic activity">
    <reaction evidence="1">
        <text>3'-dephospho-CoA + GTP = GDP + CoA + H(+)</text>
        <dbReference type="Rhea" id="RHEA:61156"/>
        <dbReference type="ChEBI" id="CHEBI:15378"/>
        <dbReference type="ChEBI" id="CHEBI:37565"/>
        <dbReference type="ChEBI" id="CHEBI:57287"/>
        <dbReference type="ChEBI" id="CHEBI:57328"/>
        <dbReference type="ChEBI" id="CHEBI:58189"/>
        <dbReference type="EC" id="2.7.1.237"/>
    </reaction>
</comment>
<comment type="pathway">
    <text evidence="1">Cofactor biosynthesis; coenzyme A biosynthesis.</text>
</comment>
<comment type="similarity">
    <text evidence="1">Belongs to the GTP-dependent DPCK family.</text>
</comment>
<name>DPCKG_KORCO</name>
<reference key="1">
    <citation type="journal article" date="2008" name="Proc. Natl. Acad. Sci. U.S.A.">
        <title>A korarchaeal genome reveals new insights into the evolution of the Archaea.</title>
        <authorList>
            <person name="Elkins J.G."/>
            <person name="Podar M."/>
            <person name="Graham D.E."/>
            <person name="Makarova K.S."/>
            <person name="Wolf Y."/>
            <person name="Randau L."/>
            <person name="Hedlund B.P."/>
            <person name="Brochier-Armanet C."/>
            <person name="Kunin V."/>
            <person name="Anderson I."/>
            <person name="Lapidus A."/>
            <person name="Goltsman E."/>
            <person name="Barry K."/>
            <person name="Koonin E.V."/>
            <person name="Hugenholtz P."/>
            <person name="Kyrpides N."/>
            <person name="Wanner G."/>
            <person name="Richardson P."/>
            <person name="Keller M."/>
            <person name="Stetter K.O."/>
        </authorList>
    </citation>
    <scope>NUCLEOTIDE SEQUENCE [LARGE SCALE GENOMIC DNA]</scope>
    <source>
        <strain>OPF8</strain>
    </source>
</reference>
<feature type="chain" id="PRO_0000380052" description="GTP-dependent dephospho-CoA kinase">
    <location>
        <begin position="1"/>
        <end position="167"/>
    </location>
</feature>
<feature type="binding site" evidence="1">
    <location>
        <position position="39"/>
    </location>
    <ligand>
        <name>GTP</name>
        <dbReference type="ChEBI" id="CHEBI:37565"/>
    </ligand>
</feature>
<feature type="binding site" evidence="1">
    <location>
        <position position="41"/>
    </location>
    <ligand>
        <name>GTP</name>
        <dbReference type="ChEBI" id="CHEBI:37565"/>
    </ligand>
</feature>
<feature type="binding site" evidence="1">
    <location>
        <position position="58"/>
    </location>
    <ligand>
        <name>GTP</name>
        <dbReference type="ChEBI" id="CHEBI:37565"/>
    </ligand>
</feature>
<feature type="binding site" evidence="1">
    <location>
        <position position="60"/>
    </location>
    <ligand>
        <name>GTP</name>
        <dbReference type="ChEBI" id="CHEBI:37565"/>
    </ligand>
</feature>
<feature type="binding site" evidence="1">
    <location>
        <position position="117"/>
    </location>
    <ligand>
        <name>GTP</name>
        <dbReference type="ChEBI" id="CHEBI:37565"/>
    </ligand>
</feature>
<keyword id="KW-0173">Coenzyme A biosynthesis</keyword>
<keyword id="KW-0342">GTP-binding</keyword>
<keyword id="KW-0418">Kinase</keyword>
<keyword id="KW-0547">Nucleotide-binding</keyword>
<keyword id="KW-1185">Reference proteome</keyword>
<keyword id="KW-0808">Transferase</keyword>
<accession>B1L6M9</accession>
<gene>
    <name type="ordered locus">Kcr_1362</name>
</gene>
<sequence length="167" mass="18707">MLFDLKLLEDKRGKVSEIKGSIIKSLDILENKRIISVGDRVTRELLGSGRRPEVAIIDLKERREMNCSTIFYLDDYLILVARNPAGTLMREAWLKVRKAIEISLSGKNAAVIVDGEEDLLGFPAIILPPEGWVMVYGQPGVGMVSVNIDRKAREEAMNLLQEAFLPI</sequence>